<protein>
    <recommendedName>
        <fullName evidence="1">Uracil-DNA glycosylase</fullName>
        <shortName evidence="1">UDG</shortName>
        <ecNumber evidence="1">3.2.2.27</ecNumber>
    </recommendedName>
</protein>
<reference key="1">
    <citation type="submission" date="2002-12" db="EMBL/GenBank/DDBJ databases">
        <title>Complete genome sequence of Vibrio vulnificus CMCP6.</title>
        <authorList>
            <person name="Rhee J.H."/>
            <person name="Kim S.Y."/>
            <person name="Chung S.S."/>
            <person name="Kim J.J."/>
            <person name="Moon Y.H."/>
            <person name="Jeong H."/>
            <person name="Choy H.E."/>
        </authorList>
    </citation>
    <scope>NUCLEOTIDE SEQUENCE [LARGE SCALE GENOMIC DNA]</scope>
    <source>
        <strain>CMCP6</strain>
    </source>
</reference>
<gene>
    <name evidence="1" type="primary">ung</name>
    <name type="ordered locus">VV1_0540</name>
</gene>
<name>UNG_VIBVU</name>
<accession>Q8DEP7</accession>
<sequence>MTQQLTWHDVIGAEKEQSYFQQTLNFVEAERQAGKVIYPPAKDVFNAFRYTEFQDVKVVILGQDPYHGPNQAHGLCFSVLPGIKTPPSLVNMYKELAQDIQGFQIPAHGYLEAWAKQGVLLLNTVLTVEQGKAHSHASLGWETFTDKVIEAINQHQQGVVFLLWGSHAQKKGRFIDRHKHVVLTAPHPSPLSAHRGFLGCKHFSQANQHLLDQGKQAIDWQLPLSL</sequence>
<organism>
    <name type="scientific">Vibrio vulnificus (strain CMCP6)</name>
    <dbReference type="NCBI Taxonomy" id="216895"/>
    <lineage>
        <taxon>Bacteria</taxon>
        <taxon>Pseudomonadati</taxon>
        <taxon>Pseudomonadota</taxon>
        <taxon>Gammaproteobacteria</taxon>
        <taxon>Vibrionales</taxon>
        <taxon>Vibrionaceae</taxon>
        <taxon>Vibrio</taxon>
    </lineage>
</organism>
<feature type="chain" id="PRO_0000176163" description="Uracil-DNA glycosylase">
    <location>
        <begin position="1"/>
        <end position="226"/>
    </location>
</feature>
<feature type="active site" description="Proton acceptor" evidence="1">
    <location>
        <position position="64"/>
    </location>
</feature>
<dbReference type="EC" id="3.2.2.27" evidence="1"/>
<dbReference type="EMBL" id="AE016795">
    <property type="protein sequence ID" value="AAO09057.1"/>
    <property type="molecule type" value="Genomic_DNA"/>
</dbReference>
<dbReference type="RefSeq" id="WP_011078627.1">
    <property type="nucleotide sequence ID" value="NC_004459.3"/>
</dbReference>
<dbReference type="SMR" id="Q8DEP7"/>
<dbReference type="KEGG" id="vvu:VV1_0540"/>
<dbReference type="HOGENOM" id="CLU_032162_3_0_6"/>
<dbReference type="Proteomes" id="UP000002275">
    <property type="component" value="Chromosome 1"/>
</dbReference>
<dbReference type="GO" id="GO:0005737">
    <property type="term" value="C:cytoplasm"/>
    <property type="evidence" value="ECO:0007669"/>
    <property type="project" value="UniProtKB-SubCell"/>
</dbReference>
<dbReference type="GO" id="GO:0004844">
    <property type="term" value="F:uracil DNA N-glycosylase activity"/>
    <property type="evidence" value="ECO:0007669"/>
    <property type="project" value="UniProtKB-UniRule"/>
</dbReference>
<dbReference type="GO" id="GO:0097510">
    <property type="term" value="P:base-excision repair, AP site formation via deaminated base removal"/>
    <property type="evidence" value="ECO:0007669"/>
    <property type="project" value="TreeGrafter"/>
</dbReference>
<dbReference type="CDD" id="cd10027">
    <property type="entry name" value="UDG-F1-like"/>
    <property type="match status" value="1"/>
</dbReference>
<dbReference type="FunFam" id="3.40.470.10:FF:000001">
    <property type="entry name" value="Uracil-DNA glycosylase"/>
    <property type="match status" value="1"/>
</dbReference>
<dbReference type="Gene3D" id="3.40.470.10">
    <property type="entry name" value="Uracil-DNA glycosylase-like domain"/>
    <property type="match status" value="1"/>
</dbReference>
<dbReference type="HAMAP" id="MF_00148">
    <property type="entry name" value="UDG"/>
    <property type="match status" value="1"/>
</dbReference>
<dbReference type="InterPro" id="IPR002043">
    <property type="entry name" value="UDG_fam1"/>
</dbReference>
<dbReference type="InterPro" id="IPR018085">
    <property type="entry name" value="Ura-DNA_Glyclase_AS"/>
</dbReference>
<dbReference type="InterPro" id="IPR005122">
    <property type="entry name" value="Uracil-DNA_glycosylase-like"/>
</dbReference>
<dbReference type="InterPro" id="IPR036895">
    <property type="entry name" value="Uracil-DNA_glycosylase-like_sf"/>
</dbReference>
<dbReference type="NCBIfam" id="NF003588">
    <property type="entry name" value="PRK05254.1-1"/>
    <property type="match status" value="1"/>
</dbReference>
<dbReference type="NCBIfam" id="NF003589">
    <property type="entry name" value="PRK05254.1-2"/>
    <property type="match status" value="1"/>
</dbReference>
<dbReference type="NCBIfam" id="NF003591">
    <property type="entry name" value="PRK05254.1-4"/>
    <property type="match status" value="1"/>
</dbReference>
<dbReference type="NCBIfam" id="NF003592">
    <property type="entry name" value="PRK05254.1-5"/>
    <property type="match status" value="1"/>
</dbReference>
<dbReference type="NCBIfam" id="TIGR00628">
    <property type="entry name" value="ung"/>
    <property type="match status" value="1"/>
</dbReference>
<dbReference type="PANTHER" id="PTHR11264">
    <property type="entry name" value="URACIL-DNA GLYCOSYLASE"/>
    <property type="match status" value="1"/>
</dbReference>
<dbReference type="PANTHER" id="PTHR11264:SF0">
    <property type="entry name" value="URACIL-DNA GLYCOSYLASE"/>
    <property type="match status" value="1"/>
</dbReference>
<dbReference type="Pfam" id="PF03167">
    <property type="entry name" value="UDG"/>
    <property type="match status" value="1"/>
</dbReference>
<dbReference type="SMART" id="SM00986">
    <property type="entry name" value="UDG"/>
    <property type="match status" value="1"/>
</dbReference>
<dbReference type="SMART" id="SM00987">
    <property type="entry name" value="UreE_C"/>
    <property type="match status" value="1"/>
</dbReference>
<dbReference type="SUPFAM" id="SSF52141">
    <property type="entry name" value="Uracil-DNA glycosylase-like"/>
    <property type="match status" value="1"/>
</dbReference>
<dbReference type="PROSITE" id="PS00130">
    <property type="entry name" value="U_DNA_GLYCOSYLASE"/>
    <property type="match status" value="1"/>
</dbReference>
<proteinExistence type="inferred from homology"/>
<keyword id="KW-0963">Cytoplasm</keyword>
<keyword id="KW-0227">DNA damage</keyword>
<keyword id="KW-0234">DNA repair</keyword>
<keyword id="KW-0378">Hydrolase</keyword>
<comment type="function">
    <text evidence="1">Excises uracil residues from the DNA which can arise as a result of misincorporation of dUMP residues by DNA polymerase or due to deamination of cytosine.</text>
</comment>
<comment type="catalytic activity">
    <reaction evidence="1">
        <text>Hydrolyzes single-stranded DNA or mismatched double-stranded DNA and polynucleotides, releasing free uracil.</text>
        <dbReference type="EC" id="3.2.2.27"/>
    </reaction>
</comment>
<comment type="subcellular location">
    <subcellularLocation>
        <location evidence="1">Cytoplasm</location>
    </subcellularLocation>
</comment>
<comment type="similarity">
    <text evidence="1">Belongs to the uracil-DNA glycosylase (UDG) superfamily. UNG family.</text>
</comment>
<evidence type="ECO:0000255" key="1">
    <source>
        <dbReference type="HAMAP-Rule" id="MF_00148"/>
    </source>
</evidence>